<evidence type="ECO:0000255" key="1">
    <source>
        <dbReference type="HAMAP-Rule" id="MF_00137"/>
    </source>
</evidence>
<sequence>MTLLYEGKAKRIFSTNQENELRVEYKDEVTAGNGAKKDTMAGKGRLNNQITSIIFKYLQENGIESHFIKQLSETEQLVKPVKIIPLEVVVRNIASGSITKRLGFENGEVFREPLVEFFYKNDALNDPLITDDHVKLLNIASDEDIEILKSKALKINNVLKQLMDAMNLKLVDFKIEFGKTETGQILLADEISPDTCRIWDKATNANFDKDVYRNNTGSLIETYQIFLNKLEDLK</sequence>
<feature type="chain" id="PRO_1000076468" description="Phosphoribosylaminoimidazole-succinocarboxamide synthase">
    <location>
        <begin position="1"/>
        <end position="234"/>
    </location>
</feature>
<organism>
    <name type="scientific">Staphylococcus aureus (strain JH1)</name>
    <dbReference type="NCBI Taxonomy" id="359787"/>
    <lineage>
        <taxon>Bacteria</taxon>
        <taxon>Bacillati</taxon>
        <taxon>Bacillota</taxon>
        <taxon>Bacilli</taxon>
        <taxon>Bacillales</taxon>
        <taxon>Staphylococcaceae</taxon>
        <taxon>Staphylococcus</taxon>
    </lineage>
</organism>
<keyword id="KW-0067">ATP-binding</keyword>
<keyword id="KW-0436">Ligase</keyword>
<keyword id="KW-0547">Nucleotide-binding</keyword>
<keyword id="KW-0658">Purine biosynthesis</keyword>
<name>PUR7_STAA2</name>
<comment type="catalytic activity">
    <reaction evidence="1">
        <text>5-amino-1-(5-phospho-D-ribosyl)imidazole-4-carboxylate + L-aspartate + ATP = (2S)-2-[5-amino-1-(5-phospho-beta-D-ribosyl)imidazole-4-carboxamido]succinate + ADP + phosphate + 2 H(+)</text>
        <dbReference type="Rhea" id="RHEA:22628"/>
        <dbReference type="ChEBI" id="CHEBI:15378"/>
        <dbReference type="ChEBI" id="CHEBI:29991"/>
        <dbReference type="ChEBI" id="CHEBI:30616"/>
        <dbReference type="ChEBI" id="CHEBI:43474"/>
        <dbReference type="ChEBI" id="CHEBI:58443"/>
        <dbReference type="ChEBI" id="CHEBI:77657"/>
        <dbReference type="ChEBI" id="CHEBI:456216"/>
        <dbReference type="EC" id="6.3.2.6"/>
    </reaction>
</comment>
<comment type="pathway">
    <text evidence="1">Purine metabolism; IMP biosynthesis via de novo pathway; 5-amino-1-(5-phospho-D-ribosyl)imidazole-4-carboxamide from 5-amino-1-(5-phospho-D-ribosyl)imidazole-4-carboxylate: step 1/2.</text>
</comment>
<comment type="similarity">
    <text evidence="1">Belongs to the SAICAR synthetase family.</text>
</comment>
<dbReference type="EC" id="6.3.2.6" evidence="1"/>
<dbReference type="EMBL" id="CP000736">
    <property type="protein sequence ID" value="ABR52002.1"/>
    <property type="molecule type" value="Genomic_DNA"/>
</dbReference>
<dbReference type="SMR" id="A6U0N4"/>
<dbReference type="KEGG" id="sah:SaurJH1_1148"/>
<dbReference type="HOGENOM" id="CLU_061495_2_0_9"/>
<dbReference type="UniPathway" id="UPA00074">
    <property type="reaction ID" value="UER00131"/>
</dbReference>
<dbReference type="GO" id="GO:0005524">
    <property type="term" value="F:ATP binding"/>
    <property type="evidence" value="ECO:0007669"/>
    <property type="project" value="UniProtKB-KW"/>
</dbReference>
<dbReference type="GO" id="GO:0004639">
    <property type="term" value="F:phosphoribosylaminoimidazolesuccinocarboxamide synthase activity"/>
    <property type="evidence" value="ECO:0007669"/>
    <property type="project" value="UniProtKB-UniRule"/>
</dbReference>
<dbReference type="GO" id="GO:0006189">
    <property type="term" value="P:'de novo' IMP biosynthetic process"/>
    <property type="evidence" value="ECO:0007669"/>
    <property type="project" value="UniProtKB-UniRule"/>
</dbReference>
<dbReference type="GO" id="GO:0009236">
    <property type="term" value="P:cobalamin biosynthetic process"/>
    <property type="evidence" value="ECO:0007669"/>
    <property type="project" value="InterPro"/>
</dbReference>
<dbReference type="CDD" id="cd01415">
    <property type="entry name" value="SAICAR_synt_PurC"/>
    <property type="match status" value="1"/>
</dbReference>
<dbReference type="FunFam" id="3.30.200.20:FF:000189">
    <property type="entry name" value="Phosphoribosylaminoimidazole-succinocarboxamide synthase"/>
    <property type="match status" value="1"/>
</dbReference>
<dbReference type="FunFam" id="3.30.470.20:FF:000006">
    <property type="entry name" value="Phosphoribosylaminoimidazole-succinocarboxamide synthase"/>
    <property type="match status" value="1"/>
</dbReference>
<dbReference type="Gene3D" id="3.30.470.20">
    <property type="entry name" value="ATP-grasp fold, B domain"/>
    <property type="match status" value="1"/>
</dbReference>
<dbReference type="Gene3D" id="3.30.200.20">
    <property type="entry name" value="Phosphorylase Kinase, domain 1"/>
    <property type="match status" value="1"/>
</dbReference>
<dbReference type="HAMAP" id="MF_00137">
    <property type="entry name" value="SAICAR_synth"/>
    <property type="match status" value="1"/>
</dbReference>
<dbReference type="InterPro" id="IPR028923">
    <property type="entry name" value="SAICAR_synt/ADE2_N"/>
</dbReference>
<dbReference type="InterPro" id="IPR033934">
    <property type="entry name" value="SAICAR_synt_PurC"/>
</dbReference>
<dbReference type="InterPro" id="IPR001636">
    <property type="entry name" value="SAICAR_synth"/>
</dbReference>
<dbReference type="InterPro" id="IPR050089">
    <property type="entry name" value="SAICAR_synthetase"/>
</dbReference>
<dbReference type="InterPro" id="IPR018236">
    <property type="entry name" value="SAICAR_synthetase_CS"/>
</dbReference>
<dbReference type="NCBIfam" id="TIGR00081">
    <property type="entry name" value="purC"/>
    <property type="match status" value="1"/>
</dbReference>
<dbReference type="PANTHER" id="PTHR43599">
    <property type="entry name" value="MULTIFUNCTIONAL PROTEIN ADE2"/>
    <property type="match status" value="1"/>
</dbReference>
<dbReference type="PANTHER" id="PTHR43599:SF3">
    <property type="entry name" value="SI:DKEY-6E2.2"/>
    <property type="match status" value="1"/>
</dbReference>
<dbReference type="Pfam" id="PF01259">
    <property type="entry name" value="SAICAR_synt"/>
    <property type="match status" value="1"/>
</dbReference>
<dbReference type="SUPFAM" id="SSF56104">
    <property type="entry name" value="SAICAR synthase-like"/>
    <property type="match status" value="1"/>
</dbReference>
<dbReference type="PROSITE" id="PS01057">
    <property type="entry name" value="SAICAR_SYNTHETASE_1"/>
    <property type="match status" value="1"/>
</dbReference>
<dbReference type="PROSITE" id="PS01058">
    <property type="entry name" value="SAICAR_SYNTHETASE_2"/>
    <property type="match status" value="1"/>
</dbReference>
<reference key="1">
    <citation type="submission" date="2007-06" db="EMBL/GenBank/DDBJ databases">
        <title>Complete sequence of chromosome of Staphylococcus aureus subsp. aureus JH1.</title>
        <authorList>
            <consortium name="US DOE Joint Genome Institute"/>
            <person name="Copeland A."/>
            <person name="Lucas S."/>
            <person name="Lapidus A."/>
            <person name="Barry K."/>
            <person name="Detter J.C."/>
            <person name="Glavina del Rio T."/>
            <person name="Hammon N."/>
            <person name="Israni S."/>
            <person name="Dalin E."/>
            <person name="Tice H."/>
            <person name="Pitluck S."/>
            <person name="Chain P."/>
            <person name="Malfatti S."/>
            <person name="Shin M."/>
            <person name="Vergez L."/>
            <person name="Schmutz J."/>
            <person name="Larimer F."/>
            <person name="Land M."/>
            <person name="Hauser L."/>
            <person name="Kyrpides N."/>
            <person name="Ivanova N."/>
            <person name="Tomasz A."/>
            <person name="Richardson P."/>
        </authorList>
    </citation>
    <scope>NUCLEOTIDE SEQUENCE [LARGE SCALE GENOMIC DNA]</scope>
    <source>
        <strain>JH1</strain>
    </source>
</reference>
<gene>
    <name evidence="1" type="primary">purC</name>
    <name type="ordered locus">SaurJH1_1148</name>
</gene>
<protein>
    <recommendedName>
        <fullName evidence="1">Phosphoribosylaminoimidazole-succinocarboxamide synthase</fullName>
        <ecNumber evidence="1">6.3.2.6</ecNumber>
    </recommendedName>
    <alternativeName>
        <fullName evidence="1">SAICAR synthetase</fullName>
    </alternativeName>
</protein>
<accession>A6U0N4</accession>
<proteinExistence type="inferred from homology"/>